<dbReference type="EC" id="2.1.2.9" evidence="1"/>
<dbReference type="EMBL" id="CR931997">
    <property type="protein sequence ID" value="CAI37177.1"/>
    <property type="molecule type" value="Genomic_DNA"/>
</dbReference>
<dbReference type="RefSeq" id="WP_011273585.1">
    <property type="nucleotide sequence ID" value="NC_007164.1"/>
</dbReference>
<dbReference type="SMR" id="Q4JVI0"/>
<dbReference type="STRING" id="306537.jk1013"/>
<dbReference type="KEGG" id="cjk:jk1013"/>
<dbReference type="PATRIC" id="fig|306537.10.peg.1025"/>
<dbReference type="eggNOG" id="COG0223">
    <property type="taxonomic scope" value="Bacteria"/>
</dbReference>
<dbReference type="HOGENOM" id="CLU_033347_2_0_11"/>
<dbReference type="OrthoDB" id="9802815at2"/>
<dbReference type="Proteomes" id="UP000000545">
    <property type="component" value="Chromosome"/>
</dbReference>
<dbReference type="GO" id="GO:0005829">
    <property type="term" value="C:cytosol"/>
    <property type="evidence" value="ECO:0007669"/>
    <property type="project" value="TreeGrafter"/>
</dbReference>
<dbReference type="GO" id="GO:0004479">
    <property type="term" value="F:methionyl-tRNA formyltransferase activity"/>
    <property type="evidence" value="ECO:0007669"/>
    <property type="project" value="UniProtKB-UniRule"/>
</dbReference>
<dbReference type="CDD" id="cd08646">
    <property type="entry name" value="FMT_core_Met-tRNA-FMT_N"/>
    <property type="match status" value="1"/>
</dbReference>
<dbReference type="CDD" id="cd08704">
    <property type="entry name" value="Met_tRNA_FMT_C"/>
    <property type="match status" value="1"/>
</dbReference>
<dbReference type="Gene3D" id="3.40.50.12230">
    <property type="match status" value="1"/>
</dbReference>
<dbReference type="HAMAP" id="MF_00182">
    <property type="entry name" value="Formyl_trans"/>
    <property type="match status" value="1"/>
</dbReference>
<dbReference type="InterPro" id="IPR005794">
    <property type="entry name" value="Fmt"/>
</dbReference>
<dbReference type="InterPro" id="IPR005793">
    <property type="entry name" value="Formyl_trans_C"/>
</dbReference>
<dbReference type="InterPro" id="IPR002376">
    <property type="entry name" value="Formyl_transf_N"/>
</dbReference>
<dbReference type="InterPro" id="IPR036477">
    <property type="entry name" value="Formyl_transf_N_sf"/>
</dbReference>
<dbReference type="InterPro" id="IPR011034">
    <property type="entry name" value="Formyl_transferase-like_C_sf"/>
</dbReference>
<dbReference type="InterPro" id="IPR044135">
    <property type="entry name" value="Met-tRNA-FMT_C"/>
</dbReference>
<dbReference type="InterPro" id="IPR041711">
    <property type="entry name" value="Met-tRNA-FMT_N"/>
</dbReference>
<dbReference type="NCBIfam" id="TIGR00460">
    <property type="entry name" value="fmt"/>
    <property type="match status" value="1"/>
</dbReference>
<dbReference type="PANTHER" id="PTHR11138">
    <property type="entry name" value="METHIONYL-TRNA FORMYLTRANSFERASE"/>
    <property type="match status" value="1"/>
</dbReference>
<dbReference type="PANTHER" id="PTHR11138:SF5">
    <property type="entry name" value="METHIONYL-TRNA FORMYLTRANSFERASE, MITOCHONDRIAL"/>
    <property type="match status" value="1"/>
</dbReference>
<dbReference type="Pfam" id="PF02911">
    <property type="entry name" value="Formyl_trans_C"/>
    <property type="match status" value="1"/>
</dbReference>
<dbReference type="Pfam" id="PF00551">
    <property type="entry name" value="Formyl_trans_N"/>
    <property type="match status" value="1"/>
</dbReference>
<dbReference type="SUPFAM" id="SSF50486">
    <property type="entry name" value="FMT C-terminal domain-like"/>
    <property type="match status" value="1"/>
</dbReference>
<dbReference type="SUPFAM" id="SSF53328">
    <property type="entry name" value="Formyltransferase"/>
    <property type="match status" value="1"/>
</dbReference>
<sequence>MKIVFAGTPEPAAVALEHLIADERIEVVAVVTQPDAKRGRGRSLRPSKVAEVAEEAAIPTYKWPSLKAGTESGDEARAVLGDLAAQGVTAAAVVAYGNLIPKDILDVFEHGWVNLHYSLLPRWRGAAPVQAALAAGDETTGASIFRIEEGLDTGPVAAQLTQKIGLEDTADDLLASLTYAGRELLADTLVAMDEGKAELSGQDDAQATHAPKIHPADAQIDWSQPAEVIQRVARAHTPAPGAWTLLDGQRYKIGMLLPSDPADVAELGPGEVVASPKKVFVGTGTGPLEITRIQPPGKKMMEAAAWARGQQELLAGRPTFSARETGE</sequence>
<proteinExistence type="inferred from homology"/>
<comment type="function">
    <text evidence="1">Attaches a formyl group to the free amino group of methionyl-tRNA(fMet). The formyl group appears to play a dual role in the initiator identity of N-formylmethionyl-tRNA by promoting its recognition by IF2 and preventing the misappropriation of this tRNA by the elongation apparatus.</text>
</comment>
<comment type="catalytic activity">
    <reaction evidence="1">
        <text>L-methionyl-tRNA(fMet) + (6R)-10-formyltetrahydrofolate = N-formyl-L-methionyl-tRNA(fMet) + (6S)-5,6,7,8-tetrahydrofolate + H(+)</text>
        <dbReference type="Rhea" id="RHEA:24380"/>
        <dbReference type="Rhea" id="RHEA-COMP:9952"/>
        <dbReference type="Rhea" id="RHEA-COMP:9953"/>
        <dbReference type="ChEBI" id="CHEBI:15378"/>
        <dbReference type="ChEBI" id="CHEBI:57453"/>
        <dbReference type="ChEBI" id="CHEBI:78530"/>
        <dbReference type="ChEBI" id="CHEBI:78844"/>
        <dbReference type="ChEBI" id="CHEBI:195366"/>
        <dbReference type="EC" id="2.1.2.9"/>
    </reaction>
</comment>
<comment type="similarity">
    <text evidence="1">Belongs to the Fmt family.</text>
</comment>
<evidence type="ECO:0000255" key="1">
    <source>
        <dbReference type="HAMAP-Rule" id="MF_00182"/>
    </source>
</evidence>
<gene>
    <name evidence="1" type="primary">fmt</name>
    <name type="ordered locus">jk1013</name>
</gene>
<organism>
    <name type="scientific">Corynebacterium jeikeium (strain K411)</name>
    <dbReference type="NCBI Taxonomy" id="306537"/>
    <lineage>
        <taxon>Bacteria</taxon>
        <taxon>Bacillati</taxon>
        <taxon>Actinomycetota</taxon>
        <taxon>Actinomycetes</taxon>
        <taxon>Mycobacteriales</taxon>
        <taxon>Corynebacteriaceae</taxon>
        <taxon>Corynebacterium</taxon>
    </lineage>
</organism>
<protein>
    <recommendedName>
        <fullName evidence="1">Methionyl-tRNA formyltransferase</fullName>
        <ecNumber evidence="1">2.1.2.9</ecNumber>
    </recommendedName>
</protein>
<feature type="chain" id="PRO_1000020052" description="Methionyl-tRNA formyltransferase">
    <location>
        <begin position="1"/>
        <end position="327"/>
    </location>
</feature>
<feature type="binding site" evidence="1">
    <location>
        <begin position="118"/>
        <end position="121"/>
    </location>
    <ligand>
        <name>(6S)-5,6,7,8-tetrahydrofolate</name>
        <dbReference type="ChEBI" id="CHEBI:57453"/>
    </ligand>
</feature>
<reference key="1">
    <citation type="journal article" date="2005" name="J. Bacteriol.">
        <title>Complete genome sequence and analysis of the multiresistant nosocomial pathogen Corynebacterium jeikeium K411, a lipid-requiring bacterium of the human skin flora.</title>
        <authorList>
            <person name="Tauch A."/>
            <person name="Kaiser O."/>
            <person name="Hain T."/>
            <person name="Goesmann A."/>
            <person name="Weisshaar B."/>
            <person name="Albersmeier A."/>
            <person name="Bekel T."/>
            <person name="Bischoff N."/>
            <person name="Brune I."/>
            <person name="Chakraborty T."/>
            <person name="Kalinowski J."/>
            <person name="Meyer F."/>
            <person name="Rupp O."/>
            <person name="Schneiker S."/>
            <person name="Viehoever P."/>
            <person name="Puehler A."/>
        </authorList>
    </citation>
    <scope>NUCLEOTIDE SEQUENCE [LARGE SCALE GENOMIC DNA]</scope>
    <source>
        <strain>K411</strain>
    </source>
</reference>
<name>FMT_CORJK</name>
<accession>Q4JVI0</accession>
<keyword id="KW-0648">Protein biosynthesis</keyword>
<keyword id="KW-1185">Reference proteome</keyword>
<keyword id="KW-0808">Transferase</keyword>